<reference key="1">
    <citation type="submission" date="2003-11" db="EMBL/GenBank/DDBJ databases">
        <title>Whole genome sequence of Porphyra yezoensis chloroplast.</title>
        <authorList>
            <person name="Kunimoto M."/>
            <person name="Morishima K."/>
            <person name="Yoshikawa M."/>
            <person name="Fukuda S."/>
            <person name="Kobayashi T."/>
            <person name="Kobayashi M."/>
            <person name="Okazaki T."/>
            <person name="Ohara I."/>
            <person name="Nakayama I."/>
        </authorList>
    </citation>
    <scope>NUCLEOTIDE SEQUENCE [LARGE SCALE GENOMIC DNA]</scope>
    <source>
        <strain>U-51</strain>
    </source>
</reference>
<gene>
    <name evidence="1" type="primary">psbJ</name>
</gene>
<comment type="function">
    <text evidence="1">One of the components of the core complex of photosystem II (PSII). PSII is a light-driven water:plastoquinone oxidoreductase that uses light energy to abstract electrons from H(2)O, generating O(2) and a proton gradient subsequently used for ATP formation. It consists of a core antenna complex that captures photons, and an electron transfer chain that converts photonic excitation into a charge separation.</text>
</comment>
<comment type="subunit">
    <text evidence="1">PSII is composed of 1 copy each of membrane proteins PsbA, PsbB, PsbC, PsbD, PsbE, PsbF, PsbH, PsbI, PsbJ, PsbK, PsbL, PsbM, PsbT, PsbX, PsbY, PsbZ, Psb30/Ycf12, at least 3 peripheral proteins of the oxygen-evolving complex and a large number of cofactors. It forms dimeric complexes.</text>
</comment>
<comment type="subcellular location">
    <subcellularLocation>
        <location evidence="1">Plastid</location>
        <location evidence="1">Chloroplast thylakoid membrane</location>
        <topology evidence="1">Single-pass membrane protein</topology>
    </subcellularLocation>
</comment>
<comment type="similarity">
    <text evidence="1">Belongs to the PsbJ family.</text>
</comment>
<evidence type="ECO:0000255" key="1">
    <source>
        <dbReference type="HAMAP-Rule" id="MF_01305"/>
    </source>
</evidence>
<proteinExistence type="inferred from homology"/>
<keyword id="KW-0150">Chloroplast</keyword>
<keyword id="KW-0472">Membrane</keyword>
<keyword id="KW-0602">Photosynthesis</keyword>
<keyword id="KW-0604">Photosystem II</keyword>
<keyword id="KW-0934">Plastid</keyword>
<keyword id="KW-0674">Reaction center</keyword>
<keyword id="KW-0793">Thylakoid</keyword>
<keyword id="KW-0812">Transmembrane</keyword>
<keyword id="KW-1133">Transmembrane helix</keyword>
<dbReference type="EMBL" id="AP006715">
    <property type="protein sequence ID" value="BAE92512.1"/>
    <property type="molecule type" value="Genomic_DNA"/>
</dbReference>
<dbReference type="RefSeq" id="YP_537069.1">
    <property type="nucleotide sequence ID" value="NC_007932.1"/>
</dbReference>
<dbReference type="SMR" id="Q1XD99"/>
<dbReference type="GeneID" id="3978784"/>
<dbReference type="GO" id="GO:0009535">
    <property type="term" value="C:chloroplast thylakoid membrane"/>
    <property type="evidence" value="ECO:0007669"/>
    <property type="project" value="UniProtKB-SubCell"/>
</dbReference>
<dbReference type="GO" id="GO:0009539">
    <property type="term" value="C:photosystem II reaction center"/>
    <property type="evidence" value="ECO:0007669"/>
    <property type="project" value="InterPro"/>
</dbReference>
<dbReference type="GO" id="GO:0015979">
    <property type="term" value="P:photosynthesis"/>
    <property type="evidence" value="ECO:0007669"/>
    <property type="project" value="UniProtKB-UniRule"/>
</dbReference>
<dbReference type="Gene3D" id="6.10.250.2070">
    <property type="match status" value="1"/>
</dbReference>
<dbReference type="HAMAP" id="MF_01305">
    <property type="entry name" value="PSII_PsbJ"/>
    <property type="match status" value="1"/>
</dbReference>
<dbReference type="InterPro" id="IPR002682">
    <property type="entry name" value="PSII_PsbJ"/>
</dbReference>
<dbReference type="InterPro" id="IPR037267">
    <property type="entry name" value="PSII_PsbJ_sf"/>
</dbReference>
<dbReference type="NCBIfam" id="NF002722">
    <property type="entry name" value="PRK02565.1"/>
    <property type="match status" value="1"/>
</dbReference>
<dbReference type="PANTHER" id="PTHR34812">
    <property type="entry name" value="PHOTOSYSTEM II REACTION CENTER PROTEIN J"/>
    <property type="match status" value="1"/>
</dbReference>
<dbReference type="PANTHER" id="PTHR34812:SF3">
    <property type="entry name" value="PHOTOSYSTEM II REACTION CENTER PROTEIN J"/>
    <property type="match status" value="1"/>
</dbReference>
<dbReference type="Pfam" id="PF01788">
    <property type="entry name" value="PsbJ"/>
    <property type="match status" value="1"/>
</dbReference>
<dbReference type="SUPFAM" id="SSF161021">
    <property type="entry name" value="Photosystem II reaction center protein J, PsbJ"/>
    <property type="match status" value="1"/>
</dbReference>
<protein>
    <recommendedName>
        <fullName evidence="1">Photosystem II reaction center protein J</fullName>
        <shortName evidence="1">PSII-J</shortName>
    </recommendedName>
</protein>
<feature type="chain" id="PRO_0000276121" description="Photosystem II reaction center protein J">
    <location>
        <begin position="1"/>
        <end position="39"/>
    </location>
</feature>
<feature type="transmembrane region" description="Helical" evidence="1">
    <location>
        <begin position="9"/>
        <end position="29"/>
    </location>
</feature>
<geneLocation type="chloroplast"/>
<organism>
    <name type="scientific">Pyropia yezoensis</name>
    <name type="common">Susabi-nori</name>
    <name type="synonym">Porphyra yezoensis</name>
    <dbReference type="NCBI Taxonomy" id="2788"/>
    <lineage>
        <taxon>Eukaryota</taxon>
        <taxon>Rhodophyta</taxon>
        <taxon>Bangiophyceae</taxon>
        <taxon>Bangiales</taxon>
        <taxon>Bangiaceae</taxon>
        <taxon>Pyropia</taxon>
    </lineage>
</organism>
<sequence length="39" mass="3870">MAGTGRIPLWLVATVGGIAAITVLGIFIYGSYSGVGSSL</sequence>
<name>PSBJ_PYRYE</name>
<accession>Q1XD99</accession>